<protein>
    <recommendedName>
        <fullName evidence="1">tRNA pseudouridine synthase A</fullName>
        <ecNumber evidence="1">5.4.99.12</ecNumber>
    </recommendedName>
    <alternativeName>
        <fullName evidence="1">tRNA pseudouridine(38-40) synthase</fullName>
    </alternativeName>
    <alternativeName>
        <fullName evidence="1">tRNA pseudouridylate synthase I</fullName>
    </alternativeName>
    <alternativeName>
        <fullName evidence="1">tRNA-uridine isomerase I</fullName>
    </alternativeName>
</protein>
<gene>
    <name evidence="1" type="primary">truA</name>
    <name type="ordered locus">Mnod_4747</name>
</gene>
<evidence type="ECO:0000255" key="1">
    <source>
        <dbReference type="HAMAP-Rule" id="MF_00171"/>
    </source>
</evidence>
<dbReference type="EC" id="5.4.99.12" evidence="1"/>
<dbReference type="EMBL" id="CP001349">
    <property type="protein sequence ID" value="ACL59612.1"/>
    <property type="molecule type" value="Genomic_DNA"/>
</dbReference>
<dbReference type="RefSeq" id="WP_015931246.1">
    <property type="nucleotide sequence ID" value="NC_011894.1"/>
</dbReference>
<dbReference type="SMR" id="B8IFQ2"/>
<dbReference type="STRING" id="460265.Mnod_4747"/>
<dbReference type="KEGG" id="mno:Mnod_4747"/>
<dbReference type="eggNOG" id="COG0101">
    <property type="taxonomic scope" value="Bacteria"/>
</dbReference>
<dbReference type="HOGENOM" id="CLU_014673_0_2_5"/>
<dbReference type="OrthoDB" id="9811823at2"/>
<dbReference type="Proteomes" id="UP000008207">
    <property type="component" value="Chromosome"/>
</dbReference>
<dbReference type="GO" id="GO:0003723">
    <property type="term" value="F:RNA binding"/>
    <property type="evidence" value="ECO:0007669"/>
    <property type="project" value="InterPro"/>
</dbReference>
<dbReference type="GO" id="GO:0160147">
    <property type="term" value="F:tRNA pseudouridine(38-40) synthase activity"/>
    <property type="evidence" value="ECO:0007669"/>
    <property type="project" value="UniProtKB-EC"/>
</dbReference>
<dbReference type="GO" id="GO:0031119">
    <property type="term" value="P:tRNA pseudouridine synthesis"/>
    <property type="evidence" value="ECO:0007669"/>
    <property type="project" value="UniProtKB-UniRule"/>
</dbReference>
<dbReference type="CDD" id="cd02570">
    <property type="entry name" value="PseudoU_synth_EcTruA"/>
    <property type="match status" value="1"/>
</dbReference>
<dbReference type="FunFam" id="3.30.70.580:FF:000001">
    <property type="entry name" value="tRNA pseudouridine synthase A"/>
    <property type="match status" value="1"/>
</dbReference>
<dbReference type="Gene3D" id="3.30.70.660">
    <property type="entry name" value="Pseudouridine synthase I, catalytic domain, C-terminal subdomain"/>
    <property type="match status" value="1"/>
</dbReference>
<dbReference type="Gene3D" id="3.30.70.580">
    <property type="entry name" value="Pseudouridine synthase I, catalytic domain, N-terminal subdomain"/>
    <property type="match status" value="1"/>
</dbReference>
<dbReference type="HAMAP" id="MF_00171">
    <property type="entry name" value="TruA"/>
    <property type="match status" value="1"/>
</dbReference>
<dbReference type="InterPro" id="IPR020103">
    <property type="entry name" value="PsdUridine_synth_cat_dom_sf"/>
</dbReference>
<dbReference type="InterPro" id="IPR001406">
    <property type="entry name" value="PsdUridine_synth_TruA"/>
</dbReference>
<dbReference type="InterPro" id="IPR020097">
    <property type="entry name" value="PsdUridine_synth_TruA_a/b_dom"/>
</dbReference>
<dbReference type="InterPro" id="IPR020095">
    <property type="entry name" value="PsdUridine_synth_TruA_C"/>
</dbReference>
<dbReference type="InterPro" id="IPR020094">
    <property type="entry name" value="TruA/RsuA/RluB/E/F_N"/>
</dbReference>
<dbReference type="NCBIfam" id="TIGR00071">
    <property type="entry name" value="hisT_truA"/>
    <property type="match status" value="1"/>
</dbReference>
<dbReference type="PANTHER" id="PTHR11142">
    <property type="entry name" value="PSEUDOURIDYLATE SYNTHASE"/>
    <property type="match status" value="1"/>
</dbReference>
<dbReference type="PANTHER" id="PTHR11142:SF0">
    <property type="entry name" value="TRNA PSEUDOURIDINE SYNTHASE-LIKE 1"/>
    <property type="match status" value="1"/>
</dbReference>
<dbReference type="Pfam" id="PF01416">
    <property type="entry name" value="PseudoU_synth_1"/>
    <property type="match status" value="2"/>
</dbReference>
<dbReference type="PIRSF" id="PIRSF001430">
    <property type="entry name" value="tRNA_psdUrid_synth"/>
    <property type="match status" value="1"/>
</dbReference>
<dbReference type="SUPFAM" id="SSF55120">
    <property type="entry name" value="Pseudouridine synthase"/>
    <property type="match status" value="1"/>
</dbReference>
<proteinExistence type="inferred from homology"/>
<feature type="chain" id="PRO_1000194562" description="tRNA pseudouridine synthase A">
    <location>
        <begin position="1"/>
        <end position="254"/>
    </location>
</feature>
<feature type="active site" description="Nucleophile" evidence="1">
    <location>
        <position position="52"/>
    </location>
</feature>
<feature type="binding site" evidence="1">
    <location>
        <position position="111"/>
    </location>
    <ligand>
        <name>substrate</name>
    </ligand>
</feature>
<reference key="1">
    <citation type="submission" date="2009-01" db="EMBL/GenBank/DDBJ databases">
        <title>Complete sequence of chromosome of Methylobacterium nodulans ORS 2060.</title>
        <authorList>
            <consortium name="US DOE Joint Genome Institute"/>
            <person name="Lucas S."/>
            <person name="Copeland A."/>
            <person name="Lapidus A."/>
            <person name="Glavina del Rio T."/>
            <person name="Dalin E."/>
            <person name="Tice H."/>
            <person name="Bruce D."/>
            <person name="Goodwin L."/>
            <person name="Pitluck S."/>
            <person name="Sims D."/>
            <person name="Brettin T."/>
            <person name="Detter J.C."/>
            <person name="Han C."/>
            <person name="Larimer F."/>
            <person name="Land M."/>
            <person name="Hauser L."/>
            <person name="Kyrpides N."/>
            <person name="Ivanova N."/>
            <person name="Marx C.J."/>
            <person name="Richardson P."/>
        </authorList>
    </citation>
    <scope>NUCLEOTIDE SEQUENCE [LARGE SCALE GENOMIC DNA]</scope>
    <source>
        <strain>LMG 21967 / CNCM I-2342 / ORS 2060</strain>
    </source>
</reference>
<name>TRUA_METNO</name>
<keyword id="KW-0413">Isomerase</keyword>
<keyword id="KW-1185">Reference proteome</keyword>
<keyword id="KW-0819">tRNA processing</keyword>
<comment type="function">
    <text evidence="1">Formation of pseudouridine at positions 38, 39 and 40 in the anticodon stem and loop of transfer RNAs.</text>
</comment>
<comment type="catalytic activity">
    <reaction evidence="1">
        <text>uridine(38/39/40) in tRNA = pseudouridine(38/39/40) in tRNA</text>
        <dbReference type="Rhea" id="RHEA:22376"/>
        <dbReference type="Rhea" id="RHEA-COMP:10085"/>
        <dbReference type="Rhea" id="RHEA-COMP:10087"/>
        <dbReference type="ChEBI" id="CHEBI:65314"/>
        <dbReference type="ChEBI" id="CHEBI:65315"/>
        <dbReference type="EC" id="5.4.99.12"/>
    </reaction>
</comment>
<comment type="subunit">
    <text evidence="1">Homodimer.</text>
</comment>
<comment type="similarity">
    <text evidence="1">Belongs to the tRNA pseudouridine synthase TruA family.</text>
</comment>
<accession>B8IFQ2</accession>
<organism>
    <name type="scientific">Methylobacterium nodulans (strain LMG 21967 / CNCM I-2342 / ORS 2060)</name>
    <dbReference type="NCBI Taxonomy" id="460265"/>
    <lineage>
        <taxon>Bacteria</taxon>
        <taxon>Pseudomonadati</taxon>
        <taxon>Pseudomonadota</taxon>
        <taxon>Alphaproteobacteria</taxon>
        <taxon>Hyphomicrobiales</taxon>
        <taxon>Methylobacteriaceae</taxon>
        <taxon>Methylobacterium</taxon>
    </lineage>
</organism>
<sequence length="254" mass="27933">MPRYKLVVEYDGTAFAGWQRQAADRTVQQALEEAIERFVNRPVRVHCAGRTDAGVHASHQVVHLDLDREWRTDTVRDATNAHLRPEPVSVLSAARVGPDFDARHSALKRHYRYRILNRRSPPALARGYVWHVPWALDAAAMHAAAQTLLGRHDFSAFRAAECQASSPLRTLDQLDVERRGDEILVATSARSFLHHQVRGMVGTLMLAGSGRLDTAGVRAVLDSRDRARCGPLAPAAGLTLTGVDYPEAALSAPG</sequence>